<accession>Q0TEM2</accession>
<feature type="chain" id="PRO_1000013572" description="Protein RnfH">
    <location>
        <begin position="1"/>
        <end position="96"/>
    </location>
</feature>
<protein>
    <recommendedName>
        <fullName evidence="1">Protein RnfH</fullName>
    </recommendedName>
</protein>
<comment type="similarity">
    <text evidence="1">Belongs to the UPF0125 (RnfH) family.</text>
</comment>
<proteinExistence type="inferred from homology"/>
<gene>
    <name evidence="1" type="primary">rnfH</name>
    <name type="ordered locus">ECP_2618</name>
</gene>
<organism>
    <name type="scientific">Escherichia coli O6:K15:H31 (strain 536 / UPEC)</name>
    <dbReference type="NCBI Taxonomy" id="362663"/>
    <lineage>
        <taxon>Bacteria</taxon>
        <taxon>Pseudomonadati</taxon>
        <taxon>Pseudomonadota</taxon>
        <taxon>Gammaproteobacteria</taxon>
        <taxon>Enterobacterales</taxon>
        <taxon>Enterobacteriaceae</taxon>
        <taxon>Escherichia</taxon>
    </lineage>
</organism>
<sequence>MPGKIAVEVAYALPEKQYLQRVTLQEGATVEEAIRASGLLELRTDIDLTKNKVGIYSRPAKLSDIVHDGDRVEIYRPLIADPKELRRQRAEKSANK</sequence>
<dbReference type="EMBL" id="CP000247">
    <property type="protein sequence ID" value="ABG70607.1"/>
    <property type="molecule type" value="Genomic_DNA"/>
</dbReference>
<dbReference type="RefSeq" id="WP_001117834.1">
    <property type="nucleotide sequence ID" value="NC_008253.1"/>
</dbReference>
<dbReference type="SMR" id="Q0TEM2"/>
<dbReference type="KEGG" id="ecp:ECP_2618"/>
<dbReference type="HOGENOM" id="CLU_150721_1_0_6"/>
<dbReference type="Proteomes" id="UP000009182">
    <property type="component" value="Chromosome"/>
</dbReference>
<dbReference type="Gene3D" id="3.10.20.280">
    <property type="entry name" value="RnfH-like"/>
    <property type="match status" value="1"/>
</dbReference>
<dbReference type="HAMAP" id="MF_00460">
    <property type="entry name" value="UPF0125_RnfH"/>
    <property type="match status" value="1"/>
</dbReference>
<dbReference type="InterPro" id="IPR016155">
    <property type="entry name" value="Mopterin_synth/thiamin_S_b"/>
</dbReference>
<dbReference type="InterPro" id="IPR005346">
    <property type="entry name" value="RnfH"/>
</dbReference>
<dbReference type="InterPro" id="IPR037021">
    <property type="entry name" value="RnfH_sf"/>
</dbReference>
<dbReference type="NCBIfam" id="NF002490">
    <property type="entry name" value="PRK01777.1"/>
    <property type="match status" value="1"/>
</dbReference>
<dbReference type="PANTHER" id="PTHR37483">
    <property type="entry name" value="UPF0125 PROTEIN RATB"/>
    <property type="match status" value="1"/>
</dbReference>
<dbReference type="PANTHER" id="PTHR37483:SF1">
    <property type="entry name" value="UPF0125 PROTEIN RATB"/>
    <property type="match status" value="1"/>
</dbReference>
<dbReference type="Pfam" id="PF03658">
    <property type="entry name" value="Ub-RnfH"/>
    <property type="match status" value="1"/>
</dbReference>
<dbReference type="SUPFAM" id="SSF54285">
    <property type="entry name" value="MoaD/ThiS"/>
    <property type="match status" value="1"/>
</dbReference>
<name>RNFH_ECOL5</name>
<evidence type="ECO:0000255" key="1">
    <source>
        <dbReference type="HAMAP-Rule" id="MF_00460"/>
    </source>
</evidence>
<reference key="1">
    <citation type="journal article" date="2006" name="Mol. Microbiol.">
        <title>Role of pathogenicity island-associated integrases in the genome plasticity of uropathogenic Escherichia coli strain 536.</title>
        <authorList>
            <person name="Hochhut B."/>
            <person name="Wilde C."/>
            <person name="Balling G."/>
            <person name="Middendorf B."/>
            <person name="Dobrindt U."/>
            <person name="Brzuszkiewicz E."/>
            <person name="Gottschalk G."/>
            <person name="Carniel E."/>
            <person name="Hacker J."/>
        </authorList>
    </citation>
    <scope>NUCLEOTIDE SEQUENCE [LARGE SCALE GENOMIC DNA]</scope>
    <source>
        <strain>536 / UPEC</strain>
    </source>
</reference>